<sequence length="147" mass="16281">MSTYHPKSGDITRKWYVIDATDVVLGRLATHAADLLRGKGKPLYAPNVDCGDHVIVINADKVAVTSNKREREMRYRHSGYPGGLKSMTLGRSLDLHPERTIEDSIVGMMPHNKLTAASAKKLHVFSGSEHPYAAQKPEAYEIKKVAQ</sequence>
<keyword id="KW-1185">Reference proteome</keyword>
<keyword id="KW-0687">Ribonucleoprotein</keyword>
<keyword id="KW-0689">Ribosomal protein</keyword>
<evidence type="ECO:0000255" key="1">
    <source>
        <dbReference type="HAMAP-Rule" id="MF_01366"/>
    </source>
</evidence>
<evidence type="ECO:0000305" key="2"/>
<dbReference type="EMBL" id="BA000036">
    <property type="protein sequence ID" value="BAB97974.1"/>
    <property type="molecule type" value="Genomic_DNA"/>
</dbReference>
<dbReference type="EMBL" id="BX927149">
    <property type="protein sequence ID" value="CAF19286.1"/>
    <property type="molecule type" value="Genomic_DNA"/>
</dbReference>
<dbReference type="RefSeq" id="NP_599817.1">
    <property type="nucleotide sequence ID" value="NC_003450.3"/>
</dbReference>
<dbReference type="RefSeq" id="WP_003854535.1">
    <property type="nucleotide sequence ID" value="NC_006958.1"/>
</dbReference>
<dbReference type="SMR" id="Q8NST6"/>
<dbReference type="STRING" id="196627.cg0673"/>
<dbReference type="GeneID" id="1018585"/>
<dbReference type="KEGG" id="cgb:cg0673"/>
<dbReference type="KEGG" id="cgl:Cgl0581"/>
<dbReference type="PATRIC" id="fig|196627.13.peg.572"/>
<dbReference type="eggNOG" id="COG0102">
    <property type="taxonomic scope" value="Bacteria"/>
</dbReference>
<dbReference type="HOGENOM" id="CLU_082184_2_2_11"/>
<dbReference type="OrthoDB" id="9801330at2"/>
<dbReference type="BioCyc" id="CORYNE:G18NG-10143-MONOMER"/>
<dbReference type="Proteomes" id="UP000000582">
    <property type="component" value="Chromosome"/>
</dbReference>
<dbReference type="Proteomes" id="UP000001009">
    <property type="component" value="Chromosome"/>
</dbReference>
<dbReference type="GO" id="GO:0022625">
    <property type="term" value="C:cytosolic large ribosomal subunit"/>
    <property type="evidence" value="ECO:0007669"/>
    <property type="project" value="TreeGrafter"/>
</dbReference>
<dbReference type="GO" id="GO:0003729">
    <property type="term" value="F:mRNA binding"/>
    <property type="evidence" value="ECO:0007669"/>
    <property type="project" value="TreeGrafter"/>
</dbReference>
<dbReference type="GO" id="GO:0003735">
    <property type="term" value="F:structural constituent of ribosome"/>
    <property type="evidence" value="ECO:0007669"/>
    <property type="project" value="InterPro"/>
</dbReference>
<dbReference type="GO" id="GO:0017148">
    <property type="term" value="P:negative regulation of translation"/>
    <property type="evidence" value="ECO:0007669"/>
    <property type="project" value="TreeGrafter"/>
</dbReference>
<dbReference type="GO" id="GO:0006412">
    <property type="term" value="P:translation"/>
    <property type="evidence" value="ECO:0007669"/>
    <property type="project" value="UniProtKB-UniRule"/>
</dbReference>
<dbReference type="CDD" id="cd00392">
    <property type="entry name" value="Ribosomal_L13"/>
    <property type="match status" value="1"/>
</dbReference>
<dbReference type="Gene3D" id="3.90.1180.10">
    <property type="entry name" value="Ribosomal protein L13"/>
    <property type="match status" value="1"/>
</dbReference>
<dbReference type="HAMAP" id="MF_01366">
    <property type="entry name" value="Ribosomal_uL13"/>
    <property type="match status" value="1"/>
</dbReference>
<dbReference type="InterPro" id="IPR005822">
    <property type="entry name" value="Ribosomal_uL13"/>
</dbReference>
<dbReference type="InterPro" id="IPR005823">
    <property type="entry name" value="Ribosomal_uL13_bac-type"/>
</dbReference>
<dbReference type="InterPro" id="IPR036899">
    <property type="entry name" value="Ribosomal_uL13_sf"/>
</dbReference>
<dbReference type="NCBIfam" id="TIGR01066">
    <property type="entry name" value="rplM_bact"/>
    <property type="match status" value="1"/>
</dbReference>
<dbReference type="PANTHER" id="PTHR11545:SF2">
    <property type="entry name" value="LARGE RIBOSOMAL SUBUNIT PROTEIN UL13M"/>
    <property type="match status" value="1"/>
</dbReference>
<dbReference type="PANTHER" id="PTHR11545">
    <property type="entry name" value="RIBOSOMAL PROTEIN L13"/>
    <property type="match status" value="1"/>
</dbReference>
<dbReference type="Pfam" id="PF00572">
    <property type="entry name" value="Ribosomal_L13"/>
    <property type="match status" value="1"/>
</dbReference>
<dbReference type="PIRSF" id="PIRSF002181">
    <property type="entry name" value="Ribosomal_L13"/>
    <property type="match status" value="1"/>
</dbReference>
<dbReference type="SUPFAM" id="SSF52161">
    <property type="entry name" value="Ribosomal protein L13"/>
    <property type="match status" value="1"/>
</dbReference>
<feature type="chain" id="PRO_1000055373" description="Large ribosomal subunit protein uL13">
    <location>
        <begin position="1"/>
        <end position="147"/>
    </location>
</feature>
<reference key="1">
    <citation type="journal article" date="2003" name="Appl. Microbiol. Biotechnol.">
        <title>The Corynebacterium glutamicum genome: features and impacts on biotechnological processes.</title>
        <authorList>
            <person name="Ikeda M."/>
            <person name="Nakagawa S."/>
        </authorList>
    </citation>
    <scope>NUCLEOTIDE SEQUENCE [LARGE SCALE GENOMIC DNA]</scope>
    <source>
        <strain>ATCC 13032 / DSM 20300 / JCM 1318 / BCRC 11384 / CCUG 27702 / LMG 3730 / NBRC 12168 / NCIMB 10025 / NRRL B-2784 / 534</strain>
    </source>
</reference>
<reference key="2">
    <citation type="journal article" date="2003" name="J. Biotechnol.">
        <title>The complete Corynebacterium glutamicum ATCC 13032 genome sequence and its impact on the production of L-aspartate-derived amino acids and vitamins.</title>
        <authorList>
            <person name="Kalinowski J."/>
            <person name="Bathe B."/>
            <person name="Bartels D."/>
            <person name="Bischoff N."/>
            <person name="Bott M."/>
            <person name="Burkovski A."/>
            <person name="Dusch N."/>
            <person name="Eggeling L."/>
            <person name="Eikmanns B.J."/>
            <person name="Gaigalat L."/>
            <person name="Goesmann A."/>
            <person name="Hartmann M."/>
            <person name="Huthmacher K."/>
            <person name="Kraemer R."/>
            <person name="Linke B."/>
            <person name="McHardy A.C."/>
            <person name="Meyer F."/>
            <person name="Moeckel B."/>
            <person name="Pfefferle W."/>
            <person name="Puehler A."/>
            <person name="Rey D.A."/>
            <person name="Rueckert C."/>
            <person name="Rupp O."/>
            <person name="Sahm H."/>
            <person name="Wendisch V.F."/>
            <person name="Wiegraebe I."/>
            <person name="Tauch A."/>
        </authorList>
    </citation>
    <scope>NUCLEOTIDE SEQUENCE [LARGE SCALE GENOMIC DNA]</scope>
    <source>
        <strain>ATCC 13032 / DSM 20300 / JCM 1318 / BCRC 11384 / CCUG 27702 / LMG 3730 / NBRC 12168 / NCIMB 10025 / NRRL B-2784 / 534</strain>
    </source>
</reference>
<organism>
    <name type="scientific">Corynebacterium glutamicum (strain ATCC 13032 / DSM 20300 / JCM 1318 / BCRC 11384 / CCUG 27702 / LMG 3730 / NBRC 12168 / NCIMB 10025 / NRRL B-2784 / 534)</name>
    <dbReference type="NCBI Taxonomy" id="196627"/>
    <lineage>
        <taxon>Bacteria</taxon>
        <taxon>Bacillati</taxon>
        <taxon>Actinomycetota</taxon>
        <taxon>Actinomycetes</taxon>
        <taxon>Mycobacteriales</taxon>
        <taxon>Corynebacteriaceae</taxon>
        <taxon>Corynebacterium</taxon>
    </lineage>
</organism>
<name>RL13_CORGL</name>
<gene>
    <name evidence="1" type="primary">rplM</name>
    <name type="ordered locus">Cgl0581</name>
    <name type="ordered locus">cg0673</name>
</gene>
<comment type="function">
    <text evidence="1">This protein is one of the early assembly proteins of the 50S ribosomal subunit, although it is not seen to bind rRNA by itself. It is important during the early stages of 50S assembly.</text>
</comment>
<comment type="subunit">
    <text evidence="1">Part of the 50S ribosomal subunit.</text>
</comment>
<comment type="similarity">
    <text evidence="1">Belongs to the universal ribosomal protein uL13 family.</text>
</comment>
<protein>
    <recommendedName>
        <fullName evidence="1">Large ribosomal subunit protein uL13</fullName>
    </recommendedName>
    <alternativeName>
        <fullName evidence="2">50S ribosomal protein L13</fullName>
    </alternativeName>
</protein>
<accession>Q8NST6</accession>
<accession>Q6M7I0</accession>
<proteinExistence type="inferred from homology"/>